<name>HIS5_VIBCH</name>
<gene>
    <name type="primary">hisH</name>
    <name type="ordered locus">VC_1136</name>
</gene>
<protein>
    <recommendedName>
        <fullName>Imidazole glycerol phosphate synthase subunit HisH</fullName>
        <ecNumber>4.3.2.10</ecNumber>
    </recommendedName>
    <alternativeName>
        <fullName>IGP synthase glutaminase subunit</fullName>
        <ecNumber>3.5.1.2</ecNumber>
    </alternativeName>
    <alternativeName>
        <fullName>IGP synthase subunit HisH</fullName>
    </alternativeName>
    <alternativeName>
        <fullName>ImGP synthase subunit HisH</fullName>
        <shortName>IGPS subunit HisH</shortName>
    </alternativeName>
</protein>
<keyword id="KW-0002">3D-structure</keyword>
<keyword id="KW-0028">Amino-acid biosynthesis</keyword>
<keyword id="KW-0963">Cytoplasm</keyword>
<keyword id="KW-0315">Glutamine amidotransferase</keyword>
<keyword id="KW-0368">Histidine biosynthesis</keyword>
<keyword id="KW-0378">Hydrolase</keyword>
<keyword id="KW-0456">Lyase</keyword>
<keyword id="KW-1185">Reference proteome</keyword>
<evidence type="ECO:0000250" key="1"/>
<evidence type="ECO:0007829" key="2">
    <source>
        <dbReference type="PDB" id="4GUD"/>
    </source>
</evidence>
<organism>
    <name type="scientific">Vibrio cholerae serotype O1 (strain ATCC 39315 / El Tor Inaba N16961)</name>
    <dbReference type="NCBI Taxonomy" id="243277"/>
    <lineage>
        <taxon>Bacteria</taxon>
        <taxon>Pseudomonadati</taxon>
        <taxon>Pseudomonadota</taxon>
        <taxon>Gammaproteobacteria</taxon>
        <taxon>Vibrionales</taxon>
        <taxon>Vibrionaceae</taxon>
        <taxon>Vibrio</taxon>
    </lineage>
</organism>
<reference key="1">
    <citation type="journal article" date="2000" name="Nature">
        <title>DNA sequence of both chromosomes of the cholera pathogen Vibrio cholerae.</title>
        <authorList>
            <person name="Heidelberg J.F."/>
            <person name="Eisen J.A."/>
            <person name="Nelson W.C."/>
            <person name="Clayton R.A."/>
            <person name="Gwinn M.L."/>
            <person name="Dodson R.J."/>
            <person name="Haft D.H."/>
            <person name="Hickey E.K."/>
            <person name="Peterson J.D."/>
            <person name="Umayam L.A."/>
            <person name="Gill S.R."/>
            <person name="Nelson K.E."/>
            <person name="Read T.D."/>
            <person name="Tettelin H."/>
            <person name="Richardson D.L."/>
            <person name="Ermolaeva M.D."/>
            <person name="Vamathevan J.J."/>
            <person name="Bass S."/>
            <person name="Qin H."/>
            <person name="Dragoi I."/>
            <person name="Sellers P."/>
            <person name="McDonald L.A."/>
            <person name="Utterback T.R."/>
            <person name="Fleischmann R.D."/>
            <person name="Nierman W.C."/>
            <person name="White O."/>
            <person name="Salzberg S.L."/>
            <person name="Smith H.O."/>
            <person name="Colwell R.R."/>
            <person name="Mekalanos J.J."/>
            <person name="Venter J.C."/>
            <person name="Fraser C.M."/>
        </authorList>
    </citation>
    <scope>NUCLEOTIDE SEQUENCE [LARGE SCALE GENOMIC DNA]</scope>
    <source>
        <strain>ATCC 39315 / El Tor Inaba N16961</strain>
    </source>
</reference>
<dbReference type="EC" id="4.3.2.10"/>
<dbReference type="EC" id="3.5.1.2"/>
<dbReference type="EMBL" id="AE003852">
    <property type="protein sequence ID" value="AAF94295.1"/>
    <property type="molecule type" value="Genomic_DNA"/>
</dbReference>
<dbReference type="PIR" id="C82238">
    <property type="entry name" value="C82238"/>
</dbReference>
<dbReference type="RefSeq" id="NP_230781.1">
    <property type="nucleotide sequence ID" value="NC_002505.1"/>
</dbReference>
<dbReference type="RefSeq" id="WP_000193249.1">
    <property type="nucleotide sequence ID" value="NZ_LT906614.1"/>
</dbReference>
<dbReference type="PDB" id="4GUD">
    <property type="method" value="X-ray"/>
    <property type="resolution" value="1.91 A"/>
    <property type="chains" value="A/B=1-203"/>
</dbReference>
<dbReference type="PDBsum" id="4GUD"/>
<dbReference type="SMR" id="Q9KSX0"/>
<dbReference type="STRING" id="243277.VC_1136"/>
<dbReference type="MEROPS" id="C26.965"/>
<dbReference type="DNASU" id="2614406"/>
<dbReference type="EnsemblBacteria" id="AAF94295">
    <property type="protein sequence ID" value="AAF94295"/>
    <property type="gene ID" value="VC_1136"/>
</dbReference>
<dbReference type="GeneID" id="89514108"/>
<dbReference type="KEGG" id="vch:VC_1136"/>
<dbReference type="PATRIC" id="fig|243277.26.peg.1085"/>
<dbReference type="eggNOG" id="COG0118">
    <property type="taxonomic scope" value="Bacteria"/>
</dbReference>
<dbReference type="HOGENOM" id="CLU_071837_0_0_6"/>
<dbReference type="UniPathway" id="UPA00031">
    <property type="reaction ID" value="UER00010"/>
</dbReference>
<dbReference type="EvolutionaryTrace" id="Q9KSX0"/>
<dbReference type="Proteomes" id="UP000000584">
    <property type="component" value="Chromosome 1"/>
</dbReference>
<dbReference type="GO" id="GO:0005737">
    <property type="term" value="C:cytoplasm"/>
    <property type="evidence" value="ECO:0007669"/>
    <property type="project" value="UniProtKB-SubCell"/>
</dbReference>
<dbReference type="GO" id="GO:0004359">
    <property type="term" value="F:glutaminase activity"/>
    <property type="evidence" value="ECO:0007669"/>
    <property type="project" value="UniProtKB-EC"/>
</dbReference>
<dbReference type="GO" id="GO:0000107">
    <property type="term" value="F:imidazoleglycerol-phosphate synthase activity"/>
    <property type="evidence" value="ECO:0000318"/>
    <property type="project" value="GO_Central"/>
</dbReference>
<dbReference type="GO" id="GO:0016829">
    <property type="term" value="F:lyase activity"/>
    <property type="evidence" value="ECO:0007669"/>
    <property type="project" value="UniProtKB-KW"/>
</dbReference>
<dbReference type="GO" id="GO:0000105">
    <property type="term" value="P:L-histidine biosynthetic process"/>
    <property type="evidence" value="ECO:0007669"/>
    <property type="project" value="UniProtKB-UniRule"/>
</dbReference>
<dbReference type="CDD" id="cd01748">
    <property type="entry name" value="GATase1_IGP_Synthase"/>
    <property type="match status" value="1"/>
</dbReference>
<dbReference type="FunFam" id="3.40.50.880:FF:000009">
    <property type="entry name" value="Imidazole glycerol phosphate synthase subunit HisH"/>
    <property type="match status" value="1"/>
</dbReference>
<dbReference type="Gene3D" id="3.40.50.880">
    <property type="match status" value="1"/>
</dbReference>
<dbReference type="HAMAP" id="MF_00278">
    <property type="entry name" value="HisH"/>
    <property type="match status" value="1"/>
</dbReference>
<dbReference type="InterPro" id="IPR029062">
    <property type="entry name" value="Class_I_gatase-like"/>
</dbReference>
<dbReference type="InterPro" id="IPR017926">
    <property type="entry name" value="GATASE"/>
</dbReference>
<dbReference type="InterPro" id="IPR010139">
    <property type="entry name" value="Imidazole-glycPsynth_HisH"/>
</dbReference>
<dbReference type="NCBIfam" id="TIGR01855">
    <property type="entry name" value="IMP_synth_hisH"/>
    <property type="match status" value="1"/>
</dbReference>
<dbReference type="PANTHER" id="PTHR42701">
    <property type="entry name" value="IMIDAZOLE GLYCEROL PHOSPHATE SYNTHASE SUBUNIT HISH"/>
    <property type="match status" value="1"/>
</dbReference>
<dbReference type="PANTHER" id="PTHR42701:SF1">
    <property type="entry name" value="IMIDAZOLE GLYCEROL PHOSPHATE SYNTHASE SUBUNIT HISH"/>
    <property type="match status" value="1"/>
</dbReference>
<dbReference type="Pfam" id="PF00117">
    <property type="entry name" value="GATase"/>
    <property type="match status" value="1"/>
</dbReference>
<dbReference type="PIRSF" id="PIRSF000495">
    <property type="entry name" value="Amidotransf_hisH"/>
    <property type="match status" value="1"/>
</dbReference>
<dbReference type="SUPFAM" id="SSF52317">
    <property type="entry name" value="Class I glutamine amidotransferase-like"/>
    <property type="match status" value="1"/>
</dbReference>
<dbReference type="PROSITE" id="PS51273">
    <property type="entry name" value="GATASE_TYPE_1"/>
    <property type="match status" value="1"/>
</dbReference>
<comment type="function">
    <text evidence="1">IGPS catalyzes the conversion of PRFAR and glutamine to IGP, AICAR and glutamate. The HisH subunit catalyzes the hydrolysis of glutamine to glutamate and ammonia as part of the synthesis of IGP and AICAR. The resulting ammonia molecule is channeled to the active site of HisF (By similarity).</text>
</comment>
<comment type="catalytic activity">
    <reaction>
        <text>5-[(5-phospho-1-deoxy-D-ribulos-1-ylimino)methylamino]-1-(5-phospho-beta-D-ribosyl)imidazole-4-carboxamide + L-glutamine = D-erythro-1-(imidazol-4-yl)glycerol 3-phosphate + 5-amino-1-(5-phospho-beta-D-ribosyl)imidazole-4-carboxamide + L-glutamate + H(+)</text>
        <dbReference type="Rhea" id="RHEA:24793"/>
        <dbReference type="ChEBI" id="CHEBI:15378"/>
        <dbReference type="ChEBI" id="CHEBI:29985"/>
        <dbReference type="ChEBI" id="CHEBI:58278"/>
        <dbReference type="ChEBI" id="CHEBI:58359"/>
        <dbReference type="ChEBI" id="CHEBI:58475"/>
        <dbReference type="ChEBI" id="CHEBI:58525"/>
        <dbReference type="EC" id="4.3.2.10"/>
    </reaction>
</comment>
<comment type="catalytic activity">
    <reaction>
        <text>L-glutamine + H2O = L-glutamate + NH4(+)</text>
        <dbReference type="Rhea" id="RHEA:15889"/>
        <dbReference type="ChEBI" id="CHEBI:15377"/>
        <dbReference type="ChEBI" id="CHEBI:28938"/>
        <dbReference type="ChEBI" id="CHEBI:29985"/>
        <dbReference type="ChEBI" id="CHEBI:58359"/>
        <dbReference type="EC" id="3.5.1.2"/>
    </reaction>
</comment>
<comment type="pathway">
    <text>Amino-acid biosynthesis; L-histidine biosynthesis; L-histidine from 5-phospho-alpha-D-ribose 1-diphosphate: step 5/9.</text>
</comment>
<comment type="subunit">
    <text evidence="1">Heterodimer of HisH and HisF.</text>
</comment>
<comment type="subcellular location">
    <subcellularLocation>
        <location evidence="1">Cytoplasm</location>
    </subcellularLocation>
</comment>
<accession>Q9KSX0</accession>
<sequence length="203" mass="22274">MTQNVVIIDTGCANISSVKFAIERLGYAVTISRDPQVVLAADKLFLPGVGTASEAMKNLTERDLIELVKRVEKPLLGICLGMQLLGKLSEEKGQKADEIVQCLGLVDGEVRLLQTGDLPLPHMGWNTVQVKEGHPLFNGIEPDAYFYFVHSFAMPVGDYTIAQCEYGQPFSAAIQAGNYYGVQFHPERSSKAGARLIQNFLEL</sequence>
<feature type="chain" id="PRO_0000152441" description="Imidazole glycerol phosphate synthase subunit HisH">
    <location>
        <begin position="1"/>
        <end position="203"/>
    </location>
</feature>
<feature type="domain" description="Glutamine amidotransferase type-1">
    <location>
        <begin position="4"/>
        <end position="203"/>
    </location>
</feature>
<feature type="active site" description="Nucleophile" evidence="1">
    <location>
        <position position="79"/>
    </location>
</feature>
<feature type="active site" evidence="1">
    <location>
        <position position="185"/>
    </location>
</feature>
<feature type="active site" evidence="1">
    <location>
        <position position="187"/>
    </location>
</feature>
<feature type="strand" evidence="2">
    <location>
        <begin position="5"/>
        <end position="8"/>
    </location>
</feature>
<feature type="helix" evidence="2">
    <location>
        <begin position="15"/>
        <end position="24"/>
    </location>
</feature>
<feature type="strand" evidence="2">
    <location>
        <begin position="29"/>
        <end position="32"/>
    </location>
</feature>
<feature type="helix" evidence="2">
    <location>
        <begin position="35"/>
        <end position="40"/>
    </location>
</feature>
<feature type="strand" evidence="2">
    <location>
        <begin position="42"/>
        <end position="46"/>
    </location>
</feature>
<feature type="helix" evidence="2">
    <location>
        <begin position="52"/>
        <end position="61"/>
    </location>
</feature>
<feature type="helix" evidence="2">
    <location>
        <begin position="65"/>
        <end position="70"/>
    </location>
</feature>
<feature type="strand" evidence="2">
    <location>
        <begin position="75"/>
        <end position="78"/>
    </location>
</feature>
<feature type="helix" evidence="2">
    <location>
        <begin position="80"/>
        <end position="83"/>
    </location>
</feature>
<feature type="strand" evidence="2">
    <location>
        <begin position="86"/>
        <end position="89"/>
    </location>
</feature>
<feature type="strand" evidence="2">
    <location>
        <begin position="105"/>
        <end position="107"/>
    </location>
</feature>
<feature type="strand" evidence="2">
    <location>
        <begin position="109"/>
        <end position="112"/>
    </location>
</feature>
<feature type="strand" evidence="2">
    <location>
        <begin position="120"/>
        <end position="126"/>
    </location>
</feature>
<feature type="helix" evidence="2">
    <location>
        <begin position="135"/>
        <end position="137"/>
    </location>
</feature>
<feature type="strand" evidence="2">
    <location>
        <begin position="146"/>
        <end position="153"/>
    </location>
</feature>
<feature type="strand" evidence="2">
    <location>
        <begin position="160"/>
        <end position="176"/>
    </location>
</feature>
<feature type="strand" evidence="2">
    <location>
        <begin position="179"/>
        <end position="184"/>
    </location>
</feature>
<feature type="helix" evidence="2">
    <location>
        <begin position="186"/>
        <end position="188"/>
    </location>
</feature>
<feature type="helix" evidence="2">
    <location>
        <begin position="190"/>
        <end position="202"/>
    </location>
</feature>
<proteinExistence type="evidence at protein level"/>